<reference key="1">
    <citation type="journal article" date="2005" name="Proc. Natl. Acad. Sci. U.S.A.">
        <title>Complete genome sequence of Vibrio fischeri: a symbiotic bacterium with pathogenic congeners.</title>
        <authorList>
            <person name="Ruby E.G."/>
            <person name="Urbanowski M."/>
            <person name="Campbell J."/>
            <person name="Dunn A."/>
            <person name="Faini M."/>
            <person name="Gunsalus R."/>
            <person name="Lostroh P."/>
            <person name="Lupp C."/>
            <person name="McCann J."/>
            <person name="Millikan D."/>
            <person name="Schaefer A."/>
            <person name="Stabb E."/>
            <person name="Stevens A."/>
            <person name="Visick K."/>
            <person name="Whistler C."/>
            <person name="Greenberg E.P."/>
        </authorList>
    </citation>
    <scope>NUCLEOTIDE SEQUENCE [LARGE SCALE GENOMIC DNA]</scope>
    <source>
        <strain>ATCC 700601 / ES114</strain>
    </source>
</reference>
<sequence length="330" mass="36611">MTHILLLCGGGGTEHEVSLVSSKYISQQLSELDAFEITHLEIKDEGWFHIESGLKYELRSDKTLLSGETVSSPVDYVVPCIHGYPGETGDIQSMLDMLSIPYLGCDAESSTNSFNKITSKLWYDALGIPNTPYLFLTENNEETHQSALAAFKQWGGLFVKAACQGSSVGCYKVTSEAELSKAINDAFGYSQQVLVEKAVKPRELEVAAYEIDGQLFTTAPGEVTAPDGAFYTYDEKYGSGSHSTTSLDAQNLTEEQVKLIDQYSRKVFTQMKLKDLSRIDFFLTDDNEIYLNEVNTFPGMTPISMFPKLLEHNGDCFKTFLQKAVLNAIK</sequence>
<comment type="function">
    <text evidence="2">Cell wall formation.</text>
</comment>
<comment type="catalytic activity">
    <reaction evidence="2">
        <text>2 D-alanine + ATP = D-alanyl-D-alanine + ADP + phosphate + H(+)</text>
        <dbReference type="Rhea" id="RHEA:11224"/>
        <dbReference type="ChEBI" id="CHEBI:15378"/>
        <dbReference type="ChEBI" id="CHEBI:30616"/>
        <dbReference type="ChEBI" id="CHEBI:43474"/>
        <dbReference type="ChEBI" id="CHEBI:57416"/>
        <dbReference type="ChEBI" id="CHEBI:57822"/>
        <dbReference type="ChEBI" id="CHEBI:456216"/>
        <dbReference type="EC" id="6.3.2.4"/>
    </reaction>
</comment>
<comment type="cofactor">
    <cofactor evidence="1">
        <name>Mg(2+)</name>
        <dbReference type="ChEBI" id="CHEBI:18420"/>
    </cofactor>
    <cofactor evidence="1">
        <name>Mn(2+)</name>
        <dbReference type="ChEBI" id="CHEBI:29035"/>
    </cofactor>
    <text evidence="1">Binds 2 magnesium or manganese ions per subunit.</text>
</comment>
<comment type="pathway">
    <text evidence="2">Cell wall biogenesis; peptidoglycan biosynthesis.</text>
</comment>
<comment type="subcellular location">
    <subcellularLocation>
        <location evidence="2">Cytoplasm</location>
    </subcellularLocation>
</comment>
<comment type="similarity">
    <text evidence="2">Belongs to the D-alanine--D-alanine ligase family.</text>
</comment>
<name>DDL_ALIF1</name>
<organism>
    <name type="scientific">Aliivibrio fischeri (strain ATCC 700601 / ES114)</name>
    <name type="common">Vibrio fischeri</name>
    <dbReference type="NCBI Taxonomy" id="312309"/>
    <lineage>
        <taxon>Bacteria</taxon>
        <taxon>Pseudomonadati</taxon>
        <taxon>Pseudomonadota</taxon>
        <taxon>Gammaproteobacteria</taxon>
        <taxon>Vibrionales</taxon>
        <taxon>Vibrionaceae</taxon>
        <taxon>Aliivibrio</taxon>
    </lineage>
</organism>
<proteinExistence type="inferred from homology"/>
<accession>Q5E006</accession>
<feature type="chain" id="PRO_0000341194" description="D-alanine--D-alanine ligase">
    <location>
        <begin position="1"/>
        <end position="330"/>
    </location>
</feature>
<feature type="domain" description="ATP-grasp" evidence="2">
    <location>
        <begin position="120"/>
        <end position="326"/>
    </location>
</feature>
<feature type="binding site" evidence="2">
    <location>
        <begin position="150"/>
        <end position="205"/>
    </location>
    <ligand>
        <name>ATP</name>
        <dbReference type="ChEBI" id="CHEBI:30616"/>
    </ligand>
</feature>
<feature type="binding site" evidence="2">
    <location>
        <position position="280"/>
    </location>
    <ligand>
        <name>Mg(2+)</name>
        <dbReference type="ChEBI" id="CHEBI:18420"/>
        <label>1</label>
    </ligand>
</feature>
<feature type="binding site" evidence="2">
    <location>
        <position position="293"/>
    </location>
    <ligand>
        <name>Mg(2+)</name>
        <dbReference type="ChEBI" id="CHEBI:18420"/>
        <label>1</label>
    </ligand>
</feature>
<feature type="binding site" evidence="2">
    <location>
        <position position="293"/>
    </location>
    <ligand>
        <name>Mg(2+)</name>
        <dbReference type="ChEBI" id="CHEBI:18420"/>
        <label>2</label>
    </ligand>
</feature>
<feature type="binding site" evidence="2">
    <location>
        <position position="295"/>
    </location>
    <ligand>
        <name>Mg(2+)</name>
        <dbReference type="ChEBI" id="CHEBI:18420"/>
        <label>2</label>
    </ligand>
</feature>
<gene>
    <name evidence="2" type="primary">ddl</name>
    <name type="ordered locus">VF_A0570</name>
</gene>
<keyword id="KW-0067">ATP-binding</keyword>
<keyword id="KW-0133">Cell shape</keyword>
<keyword id="KW-0961">Cell wall biogenesis/degradation</keyword>
<keyword id="KW-0963">Cytoplasm</keyword>
<keyword id="KW-0436">Ligase</keyword>
<keyword id="KW-0460">Magnesium</keyword>
<keyword id="KW-0464">Manganese</keyword>
<keyword id="KW-0479">Metal-binding</keyword>
<keyword id="KW-0547">Nucleotide-binding</keyword>
<keyword id="KW-0573">Peptidoglycan synthesis</keyword>
<keyword id="KW-1185">Reference proteome</keyword>
<protein>
    <recommendedName>
        <fullName evidence="2">D-alanine--D-alanine ligase</fullName>
        <ecNumber evidence="2">6.3.2.4</ecNumber>
    </recommendedName>
    <alternativeName>
        <fullName evidence="2">D-Ala-D-Ala ligase</fullName>
    </alternativeName>
    <alternativeName>
        <fullName evidence="2">D-alanylalanine synthetase</fullName>
    </alternativeName>
</protein>
<evidence type="ECO:0000250" key="1"/>
<evidence type="ECO:0000255" key="2">
    <source>
        <dbReference type="HAMAP-Rule" id="MF_00047"/>
    </source>
</evidence>
<dbReference type="EC" id="6.3.2.4" evidence="2"/>
<dbReference type="EMBL" id="CP000021">
    <property type="protein sequence ID" value="AAW87640.1"/>
    <property type="molecule type" value="Genomic_DNA"/>
</dbReference>
<dbReference type="RefSeq" id="WP_005422743.1">
    <property type="nucleotide sequence ID" value="NZ_CAWLES010000002.1"/>
</dbReference>
<dbReference type="RefSeq" id="YP_206528.1">
    <property type="nucleotide sequence ID" value="NC_006841.2"/>
</dbReference>
<dbReference type="SMR" id="Q5E006"/>
<dbReference type="STRING" id="312309.VF_A0570"/>
<dbReference type="EnsemblBacteria" id="AAW87640">
    <property type="protein sequence ID" value="AAW87640"/>
    <property type="gene ID" value="VF_A0570"/>
</dbReference>
<dbReference type="GeneID" id="54165895"/>
<dbReference type="KEGG" id="vfi:VF_A0570"/>
<dbReference type="PATRIC" id="fig|312309.11.peg.3176"/>
<dbReference type="eggNOG" id="COG1181">
    <property type="taxonomic scope" value="Bacteria"/>
</dbReference>
<dbReference type="HOGENOM" id="CLU_039268_0_0_6"/>
<dbReference type="OrthoDB" id="9813261at2"/>
<dbReference type="UniPathway" id="UPA00219"/>
<dbReference type="Proteomes" id="UP000000537">
    <property type="component" value="Chromosome II"/>
</dbReference>
<dbReference type="GO" id="GO:0005829">
    <property type="term" value="C:cytosol"/>
    <property type="evidence" value="ECO:0007669"/>
    <property type="project" value="TreeGrafter"/>
</dbReference>
<dbReference type="GO" id="GO:0005524">
    <property type="term" value="F:ATP binding"/>
    <property type="evidence" value="ECO:0007669"/>
    <property type="project" value="UniProtKB-KW"/>
</dbReference>
<dbReference type="GO" id="GO:0008716">
    <property type="term" value="F:D-alanine-D-alanine ligase activity"/>
    <property type="evidence" value="ECO:0007669"/>
    <property type="project" value="UniProtKB-UniRule"/>
</dbReference>
<dbReference type="GO" id="GO:0046872">
    <property type="term" value="F:metal ion binding"/>
    <property type="evidence" value="ECO:0007669"/>
    <property type="project" value="UniProtKB-KW"/>
</dbReference>
<dbReference type="GO" id="GO:0071555">
    <property type="term" value="P:cell wall organization"/>
    <property type="evidence" value="ECO:0007669"/>
    <property type="project" value="UniProtKB-KW"/>
</dbReference>
<dbReference type="GO" id="GO:0009252">
    <property type="term" value="P:peptidoglycan biosynthetic process"/>
    <property type="evidence" value="ECO:0007669"/>
    <property type="project" value="UniProtKB-UniRule"/>
</dbReference>
<dbReference type="GO" id="GO:0008360">
    <property type="term" value="P:regulation of cell shape"/>
    <property type="evidence" value="ECO:0007669"/>
    <property type="project" value="UniProtKB-KW"/>
</dbReference>
<dbReference type="Gene3D" id="3.40.50.20">
    <property type="match status" value="1"/>
</dbReference>
<dbReference type="Gene3D" id="3.30.1490.20">
    <property type="entry name" value="ATP-grasp fold, A domain"/>
    <property type="match status" value="1"/>
</dbReference>
<dbReference type="Gene3D" id="3.30.470.20">
    <property type="entry name" value="ATP-grasp fold, B domain"/>
    <property type="match status" value="1"/>
</dbReference>
<dbReference type="HAMAP" id="MF_00047">
    <property type="entry name" value="Dala_Dala_lig"/>
    <property type="match status" value="1"/>
</dbReference>
<dbReference type="InterPro" id="IPR011761">
    <property type="entry name" value="ATP-grasp"/>
</dbReference>
<dbReference type="InterPro" id="IPR013815">
    <property type="entry name" value="ATP_grasp_subdomain_1"/>
</dbReference>
<dbReference type="InterPro" id="IPR000291">
    <property type="entry name" value="D-Ala_lig_Van_CS"/>
</dbReference>
<dbReference type="InterPro" id="IPR005905">
    <property type="entry name" value="D_ala_D_ala"/>
</dbReference>
<dbReference type="InterPro" id="IPR011095">
    <property type="entry name" value="Dala_Dala_lig_C"/>
</dbReference>
<dbReference type="InterPro" id="IPR011127">
    <property type="entry name" value="Dala_Dala_lig_N"/>
</dbReference>
<dbReference type="InterPro" id="IPR016185">
    <property type="entry name" value="PreATP-grasp_dom_sf"/>
</dbReference>
<dbReference type="NCBIfam" id="TIGR01205">
    <property type="entry name" value="D_ala_D_alaTIGR"/>
    <property type="match status" value="1"/>
</dbReference>
<dbReference type="NCBIfam" id="NF002527">
    <property type="entry name" value="PRK01966.1-3"/>
    <property type="match status" value="1"/>
</dbReference>
<dbReference type="PANTHER" id="PTHR23132">
    <property type="entry name" value="D-ALANINE--D-ALANINE LIGASE"/>
    <property type="match status" value="1"/>
</dbReference>
<dbReference type="PANTHER" id="PTHR23132:SF25">
    <property type="entry name" value="D-ALANINE--D-ALANINE LIGASE A"/>
    <property type="match status" value="1"/>
</dbReference>
<dbReference type="Pfam" id="PF07478">
    <property type="entry name" value="Dala_Dala_lig_C"/>
    <property type="match status" value="1"/>
</dbReference>
<dbReference type="Pfam" id="PF01820">
    <property type="entry name" value="Dala_Dala_lig_N"/>
    <property type="match status" value="1"/>
</dbReference>
<dbReference type="PIRSF" id="PIRSF039102">
    <property type="entry name" value="Ddl/VanB"/>
    <property type="match status" value="1"/>
</dbReference>
<dbReference type="SUPFAM" id="SSF56059">
    <property type="entry name" value="Glutathione synthetase ATP-binding domain-like"/>
    <property type="match status" value="1"/>
</dbReference>
<dbReference type="SUPFAM" id="SSF52440">
    <property type="entry name" value="PreATP-grasp domain"/>
    <property type="match status" value="1"/>
</dbReference>
<dbReference type="PROSITE" id="PS50975">
    <property type="entry name" value="ATP_GRASP"/>
    <property type="match status" value="1"/>
</dbReference>
<dbReference type="PROSITE" id="PS00843">
    <property type="entry name" value="DALA_DALA_LIGASE_1"/>
    <property type="match status" value="1"/>
</dbReference>
<dbReference type="PROSITE" id="PS00844">
    <property type="entry name" value="DALA_DALA_LIGASE_2"/>
    <property type="match status" value="1"/>
</dbReference>